<accession>B5KFM4</accession>
<accession>B5G3W4</accession>
<keyword id="KW-0227">DNA damage</keyword>
<keyword id="KW-0234">DNA repair</keyword>
<keyword id="KW-0539">Nucleus</keyword>
<keyword id="KW-1185">Reference proteome</keyword>
<dbReference type="EMBL" id="EF191823">
    <property type="protein sequence ID" value="ACH46372.1"/>
    <property type="molecule type" value="mRNA"/>
</dbReference>
<dbReference type="EMBL" id="DQ216884">
    <property type="protein sequence ID" value="ACH45975.1"/>
    <property type="status" value="ALT_FRAME"/>
    <property type="molecule type" value="mRNA"/>
</dbReference>
<dbReference type="RefSeq" id="NP_001184184.1">
    <property type="nucleotide sequence ID" value="NM_001197255.1"/>
</dbReference>
<dbReference type="SMR" id="B5KFM4"/>
<dbReference type="FunCoup" id="B5KFM4">
    <property type="interactions" value="405"/>
</dbReference>
<dbReference type="STRING" id="59729.ENSTGUP00000001286"/>
<dbReference type="Ensembl" id="ENSTGUT00000001298.2">
    <property type="protein sequence ID" value="ENSTGUP00000001286.1"/>
    <property type="gene ID" value="ENSTGUG00000001248.2"/>
</dbReference>
<dbReference type="GeneID" id="100190500"/>
<dbReference type="KEGG" id="tgu:100190500"/>
<dbReference type="CTD" id="58493"/>
<dbReference type="GeneTree" id="ENSGT00390000006366"/>
<dbReference type="HOGENOM" id="CLU_145773_1_0_1"/>
<dbReference type="InParanoid" id="B5KFM4"/>
<dbReference type="OMA" id="QPLFQTY"/>
<dbReference type="OrthoDB" id="10040290at2759"/>
<dbReference type="TreeFam" id="TF328613"/>
<dbReference type="Proteomes" id="UP000007754">
    <property type="component" value="Chromosome Z"/>
</dbReference>
<dbReference type="GO" id="GO:0005654">
    <property type="term" value="C:nucleoplasm"/>
    <property type="evidence" value="ECO:0007669"/>
    <property type="project" value="Ensembl"/>
</dbReference>
<dbReference type="GO" id="GO:0005634">
    <property type="term" value="C:nucleus"/>
    <property type="evidence" value="ECO:0000250"/>
    <property type="project" value="UniProtKB"/>
</dbReference>
<dbReference type="GO" id="GO:0035861">
    <property type="term" value="C:site of double-strand break"/>
    <property type="evidence" value="ECO:0007669"/>
    <property type="project" value="Ensembl"/>
</dbReference>
<dbReference type="GO" id="GO:0070876">
    <property type="term" value="C:SOSS complex"/>
    <property type="evidence" value="ECO:0000250"/>
    <property type="project" value="UniProtKB"/>
</dbReference>
<dbReference type="GO" id="GO:0006974">
    <property type="term" value="P:DNA damage response"/>
    <property type="evidence" value="ECO:0000250"/>
    <property type="project" value="UniProtKB"/>
</dbReference>
<dbReference type="GO" id="GO:0006281">
    <property type="term" value="P:DNA repair"/>
    <property type="evidence" value="ECO:0000250"/>
    <property type="project" value="UniProtKB"/>
</dbReference>
<dbReference type="GO" id="GO:0000724">
    <property type="term" value="P:double-strand break repair via homologous recombination"/>
    <property type="evidence" value="ECO:0007669"/>
    <property type="project" value="Ensembl"/>
</dbReference>
<dbReference type="GO" id="GO:0044818">
    <property type="term" value="P:mitotic G2/M transition checkpoint"/>
    <property type="evidence" value="ECO:0007669"/>
    <property type="project" value="Ensembl"/>
</dbReference>
<dbReference type="GO" id="GO:0010212">
    <property type="term" value="P:response to ionizing radiation"/>
    <property type="evidence" value="ECO:0000250"/>
    <property type="project" value="UniProtKB"/>
</dbReference>
<dbReference type="InterPro" id="IPR031821">
    <property type="entry name" value="SOSSC"/>
</dbReference>
<dbReference type="PANTHER" id="PTHR31526">
    <property type="entry name" value="SOSS COMPLEX SUBUNIT C"/>
    <property type="match status" value="1"/>
</dbReference>
<dbReference type="PANTHER" id="PTHR31526:SF2">
    <property type="entry name" value="SOSS COMPLEX SUBUNIT C"/>
    <property type="match status" value="1"/>
</dbReference>
<dbReference type="Pfam" id="PF15925">
    <property type="entry name" value="SOSSC"/>
    <property type="match status" value="1"/>
</dbReference>
<feature type="chain" id="PRO_0000385316" description="SOSS complex subunit C">
    <location>
        <begin position="1"/>
        <end position="104"/>
    </location>
</feature>
<evidence type="ECO:0000250" key="1"/>
<evidence type="ECO:0000305" key="2"/>
<reference key="1">
    <citation type="journal article" date="2006" name="Proc. Natl. Acad. Sci. U.S.A.">
        <title>A molecular neuroethological approach for identifying and characterizing a cascade of behaviorally regulated genes.</title>
        <authorList>
            <person name="Wada K."/>
            <person name="Howard J.T."/>
            <person name="McConnell P."/>
            <person name="Whitney O."/>
            <person name="Lints T."/>
            <person name="Rivas M.V."/>
            <person name="Horita H."/>
            <person name="Patterson M.A."/>
            <person name="White S.A."/>
            <person name="Scharff C."/>
            <person name="Haesler S."/>
            <person name="Zhao S."/>
            <person name="Sakaguchi H."/>
            <person name="Hagiwara M."/>
            <person name="Shiraki T."/>
            <person name="Hirozane-Kishikawa T."/>
            <person name="Skene P."/>
            <person name="Hayashizaki Y."/>
            <person name="Carninci P."/>
            <person name="Jarvis E.D."/>
        </authorList>
    </citation>
    <scope>NUCLEOTIDE SEQUENCE [LARGE SCALE MRNA]</scope>
    <source>
        <tissue>Brain</tissue>
    </source>
</reference>
<comment type="function">
    <text evidence="1">Component of the SOSS complex, a multiprotein complex that functions downstream of the MRN complex to promote DNA repair and G2/M checkpoint. The SOSS complex associates with single-stranded DNA at DNA lesions and influences diverse endpoints in the cellular DNA damage response including cell-cycle checkpoint activation, recombinational repair and maintenance of genomic stability. Required for efficient homologous recombination-dependent repair of double-strand breaks (DSBs) (By similarity).</text>
</comment>
<comment type="subunit">
    <text evidence="1">Belongs to the multiprotein complex Integrator. Component of the SOSS complex, composed of SOSS-B (SOSS-B1/NABP2 or SOSS-B2/NABP1), SOSS-A/INTS3 and SOSS-C/INIP (By similarity).</text>
</comment>
<comment type="subcellular location">
    <subcellularLocation>
        <location evidence="1">Nucleus</location>
    </subcellularLocation>
    <text evidence="1">Localizes to nuclear foci following DNA damage.</text>
</comment>
<comment type="similarity">
    <text evidence="2">Belongs to the SOSS-C family.</text>
</comment>
<comment type="sequence caution" evidence="2">
    <conflict type="frameshift">
        <sequence resource="EMBL-CDS" id="ACH45975"/>
    </conflict>
</comment>
<sequence length="104" mass="11437">MAANPSGQGFQNKNRVAILAELDKEKRKLLMQNQSSTNHPGASIALTRSPLNKDFRDHAEQQHIAAQQKAALQHAHAHSSGYFITQDSAFGNLILPVLPRLEAE</sequence>
<name>SOSSC_TAEGU</name>
<gene>
    <name type="primary">INIP</name>
    <name type="synonym">SSBIP1</name>
</gene>
<organism>
    <name type="scientific">Taeniopygia guttata</name>
    <name type="common">Zebra finch</name>
    <name type="synonym">Poephila guttata</name>
    <dbReference type="NCBI Taxonomy" id="59729"/>
    <lineage>
        <taxon>Eukaryota</taxon>
        <taxon>Metazoa</taxon>
        <taxon>Chordata</taxon>
        <taxon>Craniata</taxon>
        <taxon>Vertebrata</taxon>
        <taxon>Euteleostomi</taxon>
        <taxon>Archelosauria</taxon>
        <taxon>Archosauria</taxon>
        <taxon>Dinosauria</taxon>
        <taxon>Saurischia</taxon>
        <taxon>Theropoda</taxon>
        <taxon>Coelurosauria</taxon>
        <taxon>Aves</taxon>
        <taxon>Neognathae</taxon>
        <taxon>Neoaves</taxon>
        <taxon>Telluraves</taxon>
        <taxon>Australaves</taxon>
        <taxon>Passeriformes</taxon>
        <taxon>Passeroidea</taxon>
        <taxon>Estrildidae</taxon>
        <taxon>Estrildinae</taxon>
        <taxon>Taeniopygia</taxon>
    </lineage>
</organism>
<proteinExistence type="inferred from homology"/>
<protein>
    <recommendedName>
        <fullName>SOSS complex subunit C</fullName>
    </recommendedName>
    <alternativeName>
        <fullName>INTS3- and NABP-interacting protein</fullName>
    </alternativeName>
    <alternativeName>
        <fullName>Sensor of single-strand DNA complex subunit C</fullName>
    </alternativeName>
    <alternativeName>
        <fullName>Sensor of ssDNA subunit C</fullName>
        <shortName>SOSS-C</shortName>
    </alternativeName>
    <alternativeName>
        <fullName>Single-stranded DNA-binding protein-interacting protein 1</fullName>
        <shortName>SSB-interacting protein 1</shortName>
    </alternativeName>
</protein>